<proteinExistence type="evidence at transcript level"/>
<keyword id="KW-1185">Reference proteome</keyword>
<evidence type="ECO:0000255" key="1">
    <source>
        <dbReference type="PROSITE-ProRule" id="PRU00066"/>
    </source>
</evidence>
<evidence type="ECO:0000256" key="2">
    <source>
        <dbReference type="SAM" id="MobiDB-lite"/>
    </source>
</evidence>
<evidence type="ECO:0000305" key="3"/>
<reference key="1">
    <citation type="submission" date="2006-05" db="EMBL/GenBank/DDBJ databases">
        <authorList>
            <consortium name="NIH - Zebrafish Gene Collection (ZGC) project"/>
        </authorList>
    </citation>
    <scope>NUCLEOTIDE SEQUENCE [LARGE SCALE MRNA]</scope>
    <source>
        <tissue>Olfactory epithelium</tissue>
        <tissue>Skin</tissue>
    </source>
</reference>
<dbReference type="EMBL" id="BC095813">
    <property type="protein sequence ID" value="AAH95813.1"/>
    <property type="status" value="ALT_INIT"/>
    <property type="molecule type" value="mRNA"/>
</dbReference>
<dbReference type="EMBL" id="BC116517">
    <property type="protein sequence ID" value="AAI16518.1"/>
    <property type="molecule type" value="mRNA"/>
</dbReference>
<dbReference type="RefSeq" id="NP_001038734.1">
    <property type="nucleotide sequence ID" value="NM_001045269.1"/>
</dbReference>
<dbReference type="SMR" id="Q1JQ19"/>
<dbReference type="FunCoup" id="Q1JQ19">
    <property type="interactions" value="1404"/>
</dbReference>
<dbReference type="STRING" id="7955.ENSDARP00000071808"/>
<dbReference type="PaxDb" id="7955-ENSDARP00000071808"/>
<dbReference type="GeneID" id="692297"/>
<dbReference type="KEGG" id="dre:692297"/>
<dbReference type="AGR" id="ZFIN:ZDB-GENE-060512-176"/>
<dbReference type="CTD" id="692297"/>
<dbReference type="ZFIN" id="ZDB-GENE-060512-176">
    <property type="gene designation" value="depdc7a"/>
</dbReference>
<dbReference type="eggNOG" id="ENOG502QW4D">
    <property type="taxonomic scope" value="Eukaryota"/>
</dbReference>
<dbReference type="InParanoid" id="Q1JQ19"/>
<dbReference type="OrthoDB" id="276323at2759"/>
<dbReference type="PhylomeDB" id="Q1JQ19"/>
<dbReference type="PRO" id="PR:Q1JQ19"/>
<dbReference type="Proteomes" id="UP000000437">
    <property type="component" value="Chromosome 18"/>
</dbReference>
<dbReference type="GO" id="GO:0035556">
    <property type="term" value="P:intracellular signal transduction"/>
    <property type="evidence" value="ECO:0007669"/>
    <property type="project" value="InterPro"/>
</dbReference>
<dbReference type="CDD" id="cd04446">
    <property type="entry name" value="DEP_DEPDC4"/>
    <property type="match status" value="1"/>
</dbReference>
<dbReference type="CDD" id="cd04405">
    <property type="entry name" value="RhoGAP_BRCC3-like"/>
    <property type="match status" value="1"/>
</dbReference>
<dbReference type="Gene3D" id="1.10.10.10">
    <property type="entry name" value="Winged helix-like DNA-binding domain superfamily/Winged helix DNA-binding domain"/>
    <property type="match status" value="1"/>
</dbReference>
<dbReference type="InterPro" id="IPR000591">
    <property type="entry name" value="DEP_dom"/>
</dbReference>
<dbReference type="InterPro" id="IPR036388">
    <property type="entry name" value="WH-like_DNA-bd_sf"/>
</dbReference>
<dbReference type="InterPro" id="IPR036390">
    <property type="entry name" value="WH_DNA-bd_sf"/>
</dbReference>
<dbReference type="PANTHER" id="PTHR16206">
    <property type="entry name" value="DEP DOMAIN-CONTAINING"/>
    <property type="match status" value="1"/>
</dbReference>
<dbReference type="PANTHER" id="PTHR16206:SF9">
    <property type="entry name" value="DEP DOMAIN-CONTAINING PROTEIN 7"/>
    <property type="match status" value="1"/>
</dbReference>
<dbReference type="Pfam" id="PF00610">
    <property type="entry name" value="DEP"/>
    <property type="match status" value="1"/>
</dbReference>
<dbReference type="SMART" id="SM00049">
    <property type="entry name" value="DEP"/>
    <property type="match status" value="1"/>
</dbReference>
<dbReference type="SUPFAM" id="SSF46785">
    <property type="entry name" value="Winged helix' DNA-binding domain"/>
    <property type="match status" value="1"/>
</dbReference>
<dbReference type="PROSITE" id="PS50186">
    <property type="entry name" value="DEP"/>
    <property type="match status" value="1"/>
</dbReference>
<feature type="chain" id="PRO_0000307742" description="DEP domain-containing protein 7">
    <location>
        <begin position="1"/>
        <end position="515"/>
    </location>
</feature>
<feature type="domain" description="DEP" evidence="1">
    <location>
        <begin position="27"/>
        <end position="118"/>
    </location>
</feature>
<feature type="region of interest" description="Disordered" evidence="2">
    <location>
        <begin position="121"/>
        <end position="160"/>
    </location>
</feature>
<feature type="compositionally biased region" description="Polar residues" evidence="2">
    <location>
        <begin position="121"/>
        <end position="144"/>
    </location>
</feature>
<feature type="sequence conflict" description="In Ref. 1; AAH95813." evidence="3" ref="1">
    <original>Q</original>
    <variation>L</variation>
    <location>
        <position position="267"/>
    </location>
</feature>
<feature type="sequence conflict" description="In Ref. 1; AAH95813." evidence="3" ref="1">
    <original>H</original>
    <variation>R</variation>
    <location>
        <position position="451"/>
    </location>
</feature>
<comment type="similarity">
    <text evidence="3">Belongs to the DEPDC7 family.</text>
</comment>
<comment type="sequence caution" evidence="3">
    <conflict type="erroneous initiation">
        <sequence resource="EMBL-CDS" id="AAH95813"/>
    </conflict>
</comment>
<organism>
    <name type="scientific">Danio rerio</name>
    <name type="common">Zebrafish</name>
    <name type="synonym">Brachydanio rerio</name>
    <dbReference type="NCBI Taxonomy" id="7955"/>
    <lineage>
        <taxon>Eukaryota</taxon>
        <taxon>Metazoa</taxon>
        <taxon>Chordata</taxon>
        <taxon>Craniata</taxon>
        <taxon>Vertebrata</taxon>
        <taxon>Euteleostomi</taxon>
        <taxon>Actinopterygii</taxon>
        <taxon>Neopterygii</taxon>
        <taxon>Teleostei</taxon>
        <taxon>Ostariophysi</taxon>
        <taxon>Cypriniformes</taxon>
        <taxon>Danionidae</taxon>
        <taxon>Danioninae</taxon>
        <taxon>Danio</taxon>
    </lineage>
</organism>
<protein>
    <recommendedName>
        <fullName>DEP domain-containing protein 7</fullName>
    </recommendedName>
</protein>
<sequence length="515" mass="58757">MHTPPDTGMAGKPFRATYIWTNIINNLQTQVEVKRRRHNLKIYPDCFLGSEAVDVVLAHIIQSKVCGDAEVPRFKAVRLCQALMEARVFEAVDTKVFGKEKRQAKFEDSSCSLYRFLNRQTPSTSGSETIGSGYNTQRNTNSPPFQRMEDSAYSNNSPVKTDKSLEDVLGNLNMNTTITPQMMNLGLSQELMDEIWRQQTVLRLLQLIELPLLESLLEGQESPRPPLHSMDSDPDLLYTSSYLDREILKAFSEAQADSWLSAAVDCQEFLPDQLVVDVSRGLAKCEEETSQYKQLLYGVLVQHYGQSDYPPLLTNHVFDIHSGVSELLVNGKCEQALESLQLCLKLQDSRSREELRRLLRFMALAGSPHQIKLHKEIENRMAVKRAFSNAIVYGTKLAKGKVDLLVLFMMDKHHDLFKIPVTLHKLVSDKLASIIKGTDPDRITGTTYCRHLSGKEFVETVQKTTREELWTLLKTIHENTKLSLKEKRRLLGQFYKGHPEIFVQYFGNRISNIYI</sequence>
<name>DEPD7_DANRE</name>
<gene>
    <name type="primary">depdc7</name>
    <name type="ORF">zgc:136359</name>
</gene>
<accession>Q1JQ19</accession>
<accession>Q501Y7</accession>